<name>TEFF1_HUMAN</name>
<organism>
    <name type="scientific">Homo sapiens</name>
    <name type="common">Human</name>
    <dbReference type="NCBI Taxonomy" id="9606"/>
    <lineage>
        <taxon>Eukaryota</taxon>
        <taxon>Metazoa</taxon>
        <taxon>Chordata</taxon>
        <taxon>Craniata</taxon>
        <taxon>Vertebrata</taxon>
        <taxon>Euteleostomi</taxon>
        <taxon>Mammalia</taxon>
        <taxon>Eutheria</taxon>
        <taxon>Euarchontoglires</taxon>
        <taxon>Primates</taxon>
        <taxon>Haplorrhini</taxon>
        <taxon>Catarrhini</taxon>
        <taxon>Hominidae</taxon>
        <taxon>Homo</taxon>
    </lineage>
</organism>
<dbReference type="EMBL" id="U19878">
    <property type="protein sequence ID" value="AAA64622.1"/>
    <property type="status" value="ALT_FRAME"/>
    <property type="molecule type" value="mRNA"/>
</dbReference>
<dbReference type="EMBL" id="X83961">
    <property type="protein sequence ID" value="CAA58791.1"/>
    <property type="status" value="ALT_FRAME"/>
    <property type="molecule type" value="mRNA"/>
</dbReference>
<dbReference type="EMBL" id="AL831919">
    <property type="protein sequence ID" value="CAD38580.2"/>
    <property type="molecule type" value="mRNA"/>
</dbReference>
<dbReference type="EMBL" id="AL353805">
    <property type="status" value="NOT_ANNOTATED_CDS"/>
    <property type="molecule type" value="Genomic_DNA"/>
</dbReference>
<dbReference type="EMBL" id="AL354917">
    <property type="status" value="NOT_ANNOTATED_CDS"/>
    <property type="molecule type" value="Genomic_DNA"/>
</dbReference>
<dbReference type="EMBL" id="BC035056">
    <property type="protein sequence ID" value="AAH35056.1"/>
    <property type="molecule type" value="mRNA"/>
</dbReference>
<dbReference type="CCDS" id="CCDS6750.1">
    <molecule id="Q8IYR6-1"/>
</dbReference>
<dbReference type="PIR" id="G01639">
    <property type="entry name" value="G01639"/>
</dbReference>
<dbReference type="RefSeq" id="NP_001185741.1">
    <property type="nucleotide sequence ID" value="NM_001198812.1"/>
</dbReference>
<dbReference type="RefSeq" id="NP_003683.2">
    <molecule id="Q8IYR6-1"/>
    <property type="nucleotide sequence ID" value="NM_003692.4"/>
</dbReference>
<dbReference type="SMR" id="Q8IYR6"/>
<dbReference type="BioGRID" id="114145">
    <property type="interactions" value="37"/>
</dbReference>
<dbReference type="FunCoup" id="Q8IYR6">
    <property type="interactions" value="791"/>
</dbReference>
<dbReference type="IntAct" id="Q8IYR6">
    <property type="interactions" value="31"/>
</dbReference>
<dbReference type="MINT" id="Q8IYR6"/>
<dbReference type="STRING" id="9606.ENSP00000364013"/>
<dbReference type="MEROPS" id="I01.969"/>
<dbReference type="MEROPS" id="I01.974"/>
<dbReference type="TCDB" id="8.A.74.1.4">
    <property type="family name" value="the tm9 or phg1 targeting receptor (phg1) family"/>
</dbReference>
<dbReference type="GlyGen" id="Q8IYR6">
    <property type="glycosylation" value="1 site, 1 N-linked glycan (1 site)"/>
</dbReference>
<dbReference type="iPTMnet" id="Q8IYR6"/>
<dbReference type="PhosphoSitePlus" id="Q8IYR6"/>
<dbReference type="SwissPalm" id="Q8IYR6"/>
<dbReference type="BioMuta" id="TMEFF1"/>
<dbReference type="DMDM" id="74750770"/>
<dbReference type="MassIVE" id="Q8IYR6"/>
<dbReference type="PaxDb" id="9606-ENSP00000364013"/>
<dbReference type="PeptideAtlas" id="Q8IYR6"/>
<dbReference type="ProteomicsDB" id="71216">
    <molecule id="Q8IYR6-1"/>
</dbReference>
<dbReference type="Antibodypedia" id="34902">
    <property type="antibodies" value="208 antibodies from 22 providers"/>
</dbReference>
<dbReference type="DNASU" id="8577"/>
<dbReference type="Ensembl" id="ENST00000374879.5">
    <molecule id="Q8IYR6-1"/>
    <property type="protein sequence ID" value="ENSP00000364013.4"/>
    <property type="gene ID" value="ENSG00000241697.5"/>
</dbReference>
<dbReference type="GeneID" id="100526694"/>
<dbReference type="GeneID" id="8577"/>
<dbReference type="KEGG" id="hsa:100526694"/>
<dbReference type="KEGG" id="hsa:8577"/>
<dbReference type="MANE-Select" id="ENST00000374879.5">
    <property type="protein sequence ID" value="ENSP00000364013.4"/>
    <property type="RefSeq nucleotide sequence ID" value="NM_003692.5"/>
    <property type="RefSeq protein sequence ID" value="NP_003683.2"/>
</dbReference>
<dbReference type="UCSC" id="uc004baz.3">
    <molecule id="Q8IYR6-1"/>
    <property type="organism name" value="human"/>
</dbReference>
<dbReference type="AGR" id="HGNC:11866"/>
<dbReference type="AGR" id="HGNC:38838"/>
<dbReference type="CTD" id="100526694"/>
<dbReference type="CTD" id="8577"/>
<dbReference type="DisGeNET" id="100526694"/>
<dbReference type="DisGeNET" id="8577"/>
<dbReference type="GeneCards" id="TMEFF1"/>
<dbReference type="HGNC" id="HGNC:11866">
    <property type="gene designation" value="TMEFF1"/>
</dbReference>
<dbReference type="HPA" id="ENSG00000241697">
    <property type="expression patterns" value="Group enriched (brain, testis)"/>
</dbReference>
<dbReference type="MIM" id="603421">
    <property type="type" value="gene"/>
</dbReference>
<dbReference type="neXtProt" id="NX_Q8IYR6"/>
<dbReference type="OpenTargets" id="ENSG00000241697"/>
<dbReference type="OpenTargets" id="ENSG00000251349"/>
<dbReference type="PharmGKB" id="PA36567"/>
<dbReference type="VEuPathDB" id="HostDB:ENSG00000241697"/>
<dbReference type="eggNOG" id="KOG3649">
    <property type="taxonomic scope" value="Eukaryota"/>
</dbReference>
<dbReference type="GeneTree" id="ENSGT00940000160714"/>
<dbReference type="HOGENOM" id="CLU_048579_0_0_1"/>
<dbReference type="InParanoid" id="Q8IYR6"/>
<dbReference type="OMA" id="ARGSCYS"/>
<dbReference type="OrthoDB" id="328123at2759"/>
<dbReference type="PAN-GO" id="Q8IYR6">
    <property type="GO annotations" value="6 GO annotations based on evolutionary models"/>
</dbReference>
<dbReference type="PhylomeDB" id="Q8IYR6"/>
<dbReference type="TreeFam" id="TF330868"/>
<dbReference type="PathwayCommons" id="Q8IYR6"/>
<dbReference type="SignaLink" id="Q8IYR6"/>
<dbReference type="BioGRID-ORCS" id="100526694">
    <property type="hits" value="5 hits in 237 CRISPR screens"/>
</dbReference>
<dbReference type="BioGRID-ORCS" id="8577">
    <property type="hits" value="11 hits in 1139 CRISPR screens"/>
</dbReference>
<dbReference type="Pharos" id="Q8IYR6">
    <property type="development level" value="Tbio"/>
</dbReference>
<dbReference type="PRO" id="PR:Q8IYR6"/>
<dbReference type="Proteomes" id="UP000005640">
    <property type="component" value="Chromosome 9"/>
</dbReference>
<dbReference type="RNAct" id="Q8IYR6">
    <property type="molecule type" value="protein"/>
</dbReference>
<dbReference type="Bgee" id="ENSG00000241697">
    <property type="expression patterns" value="Expressed in cortical plate and 68 other cell types or tissues"/>
</dbReference>
<dbReference type="GO" id="GO:0005886">
    <property type="term" value="C:plasma membrane"/>
    <property type="evidence" value="ECO:0000314"/>
    <property type="project" value="UniProtKB"/>
</dbReference>
<dbReference type="GO" id="GO:0141069">
    <property type="term" value="F:receptor ligand inhibitor activity"/>
    <property type="evidence" value="ECO:0000314"/>
    <property type="project" value="UniProtKB"/>
</dbReference>
<dbReference type="GO" id="GO:0046597">
    <property type="term" value="P:host-mediated suppression of symbiont invasion"/>
    <property type="evidence" value="ECO:0000314"/>
    <property type="project" value="UniProtKB"/>
</dbReference>
<dbReference type="CDD" id="cd00104">
    <property type="entry name" value="KAZAL_FS"/>
    <property type="match status" value="2"/>
</dbReference>
<dbReference type="FunFam" id="3.30.60.30:FF:000051">
    <property type="entry name" value="LOW QUALITY PROTEIN: tomoregulin-1"/>
    <property type="match status" value="1"/>
</dbReference>
<dbReference type="FunFam" id="2.10.25.10:FF:000233">
    <property type="entry name" value="tomoregulin-1 isoform X1"/>
    <property type="match status" value="1"/>
</dbReference>
<dbReference type="FunFam" id="3.30.60.30:FF:000002">
    <property type="entry name" value="tomoregulin-2 isoform X1"/>
    <property type="match status" value="1"/>
</dbReference>
<dbReference type="Gene3D" id="3.30.60.30">
    <property type="match status" value="2"/>
</dbReference>
<dbReference type="Gene3D" id="2.10.25.10">
    <property type="entry name" value="Laminin"/>
    <property type="match status" value="1"/>
</dbReference>
<dbReference type="InterPro" id="IPR000742">
    <property type="entry name" value="EGF-like_dom"/>
</dbReference>
<dbReference type="InterPro" id="IPR002350">
    <property type="entry name" value="Kazal_dom"/>
</dbReference>
<dbReference type="InterPro" id="IPR036058">
    <property type="entry name" value="Kazal_dom_sf"/>
</dbReference>
<dbReference type="PANTHER" id="PTHR21632">
    <property type="entry name" value="REGULATORY PROTEIN ZESTE"/>
    <property type="match status" value="1"/>
</dbReference>
<dbReference type="PANTHER" id="PTHR21632:SF3">
    <property type="entry name" value="TOMOREGULIN-1"/>
    <property type="match status" value="1"/>
</dbReference>
<dbReference type="Pfam" id="PF07648">
    <property type="entry name" value="Kazal_2"/>
    <property type="match status" value="2"/>
</dbReference>
<dbReference type="SMART" id="SM00280">
    <property type="entry name" value="KAZAL"/>
    <property type="match status" value="2"/>
</dbReference>
<dbReference type="SUPFAM" id="SSF57196">
    <property type="entry name" value="EGF/Laminin"/>
    <property type="match status" value="1"/>
</dbReference>
<dbReference type="SUPFAM" id="SSF100895">
    <property type="entry name" value="Kazal-type serine protease inhibitors"/>
    <property type="match status" value="2"/>
</dbReference>
<dbReference type="PROSITE" id="PS00022">
    <property type="entry name" value="EGF_1"/>
    <property type="match status" value="1"/>
</dbReference>
<dbReference type="PROSITE" id="PS01186">
    <property type="entry name" value="EGF_2"/>
    <property type="match status" value="1"/>
</dbReference>
<dbReference type="PROSITE" id="PS50026">
    <property type="entry name" value="EGF_3"/>
    <property type="match status" value="2"/>
</dbReference>
<dbReference type="PROSITE" id="PS51465">
    <property type="entry name" value="KAZAL_2"/>
    <property type="match status" value="2"/>
</dbReference>
<gene>
    <name evidence="10 11 14" type="primary">TMEFF1</name>
    <name type="synonym">C9orf2</name>
</gene>
<comment type="function">
    <text evidence="5 7 8">Neuron-specific restriction factor that prevents herpes simplex virus 1 (HHV-1) infection in the brain by blocking viral entry (PubMed:39048823, PubMed:39048830). Also able to restrict herpes simplex virus 2 (HHV-2) infection, although to a lesser extent (PubMed:39048823). Acts by preventing the association between the viral glycoprotein D (gD) and its cell surface receptor NECTIN1, thereby inhibiting fusion of the virus and the cell membrane (PubMed:39048823, PubMed:39048830). Also able to prevent the association between the viral glycoprotein B (gB) and MYH9/NMMHC-IIA and MYH10/NMMHC-IIB receptors (PubMed:39048823). May be a tumor suppressor in brain cancers (PubMed:12743596).</text>
</comment>
<comment type="subunit">
    <text evidence="6">May interact with ST14.</text>
</comment>
<comment type="subcellular location">
    <subcellularLocation>
        <location evidence="5 8">Cell membrane</location>
        <topology evidence="1">Single-pass type I membrane protein</topology>
    </subcellularLocation>
</comment>
<comment type="alternative products">
    <event type="alternative splicing"/>
    <isoform>
        <id>Q8IYR6-1</id>
        <name>1</name>
        <sequence type="displayed"/>
    </isoform>
    <isoform>
        <id>Q8IYR6-2</id>
        <name>2</name>
        <sequence type="described" ref="VSP_024959"/>
    </isoform>
</comment>
<comment type="tissue specificity">
    <text evidence="5">Expressed predominantly in brain, and at lower levels in heart, placenta and skeletal muscle (PubMed:12743596). Down-regulated in brain tumors as compared to control brain tissues (PubMed:12743596).</text>
</comment>
<comment type="disease">
    <text evidence="8">Encephalopathy, acute, infection-induced, herpes-specific (IIAE) (PubMed:39048830). A rare complication of human herpesvirus 1 (HHV-1) infection, occurring in only a small minority of HHV-1 infected individuals (PubMed:39048830). It is characterized by hemorrhagic necrosis of parts of the temporal and frontal lobes (PubMed:39048830). Onset is over several days and involves fever, headache, seizures, stupor, and often coma, frequently with a fatal outcome (PubMed:39048830). Disease susceptibility is associated with variants affecting the gene represented in this entry (PubMed:39048830).</text>
</comment>
<comment type="similarity">
    <text evidence="13">Belongs to the tomoregulin family.</text>
</comment>
<comment type="sequence caution" evidence="13">
    <conflict type="frameshift">
        <sequence resource="EMBL-CDS" id="AAA64622"/>
    </conflict>
</comment>
<comment type="sequence caution" evidence="13">
    <conflict type="frameshift">
        <sequence resource="EMBL-CDS" id="CAA58791"/>
    </conflict>
</comment>
<feature type="signal peptide" evidence="1">
    <location>
        <begin position="1"/>
        <end position="39"/>
    </location>
</feature>
<feature type="chain" id="PRO_0000286056" description="Tomoregulin-1">
    <location>
        <begin position="40"/>
        <end position="380"/>
    </location>
</feature>
<feature type="topological domain" description="Extracellular" evidence="1">
    <location>
        <begin position="40"/>
        <end position="330"/>
    </location>
</feature>
<feature type="transmembrane region" description="Helical" evidence="1">
    <location>
        <begin position="331"/>
        <end position="351"/>
    </location>
</feature>
<feature type="topological domain" description="Cytoplasmic" evidence="1">
    <location>
        <begin position="352"/>
        <end position="380"/>
    </location>
</feature>
<feature type="domain" description="Kazal-like 1" evidence="3">
    <location>
        <begin position="98"/>
        <end position="145"/>
    </location>
</feature>
<feature type="domain" description="Kazal-like 2" evidence="3">
    <location>
        <begin position="189"/>
        <end position="237"/>
    </location>
</feature>
<feature type="domain" description="EGF-like" evidence="2">
    <location>
        <begin position="271"/>
        <end position="311"/>
    </location>
</feature>
<feature type="region of interest" description="Disordered" evidence="4">
    <location>
        <begin position="359"/>
        <end position="380"/>
    </location>
</feature>
<feature type="compositionally biased region" description="Polar residues" evidence="4">
    <location>
        <begin position="366"/>
        <end position="380"/>
    </location>
</feature>
<feature type="site" description="Reactive bond" evidence="3">
    <location>
        <begin position="105"/>
        <end position="106"/>
    </location>
</feature>
<feature type="site" description="Reactive bond" evidence="3">
    <location>
        <begin position="196"/>
        <end position="197"/>
    </location>
</feature>
<feature type="disulfide bond" evidence="3">
    <location>
        <begin position="99"/>
        <end position="129"/>
    </location>
</feature>
<feature type="disulfide bond" evidence="3">
    <location>
        <begin position="103"/>
        <end position="122"/>
    </location>
</feature>
<feature type="disulfide bond" evidence="3">
    <location>
        <begin position="111"/>
        <end position="143"/>
    </location>
</feature>
<feature type="disulfide bond" evidence="3">
    <location>
        <begin position="190"/>
        <end position="221"/>
    </location>
</feature>
<feature type="disulfide bond" evidence="3">
    <location>
        <begin position="194"/>
        <end position="214"/>
    </location>
</feature>
<feature type="disulfide bond" evidence="3">
    <location>
        <begin position="203"/>
        <end position="235"/>
    </location>
</feature>
<feature type="disulfide bond" evidence="2">
    <location>
        <begin position="275"/>
        <end position="288"/>
    </location>
</feature>
<feature type="disulfide bond" evidence="2">
    <location>
        <begin position="283"/>
        <end position="299"/>
    </location>
</feature>
<feature type="disulfide bond" evidence="2">
    <location>
        <begin position="301"/>
        <end position="310"/>
    </location>
</feature>
<feature type="splice variant" id="VSP_024959" description="In isoform 2." evidence="9">
    <original>MGAAAAEAPLRLPAAPPLAFCCYTSVLLLFAFSLPGSRASNQPPGGGGGSGGDCPGGKGKSINCS</original>
    <variation>MLPEQLYFLQSPPEEEPEYHPDASAQ</variation>
    <location>
        <begin position="1"/>
        <end position="65"/>
    </location>
</feature>
<feature type="sequence variant" id="VAR_089836" description="Found in a patient with Encephalopathy, acute, infection-induced, herpes-specific; impaired ability to restrict herpes simplex virus 1 (HHV-1) infection in the brain; dbSNP:rs199581308." evidence="8">
    <original>P</original>
    <variation>A</variation>
    <location>
        <position position="44"/>
    </location>
</feature>
<feature type="sequence variant" id="VAR_032060" description="In dbSNP:rs35624603.">
    <original>V</original>
    <variation>I</variation>
    <location>
        <position position="189"/>
    </location>
</feature>
<feature type="sequence conflict" description="In Ref. 1; AAA64622/CAA58791." evidence="13" ref="1">
    <original>E</original>
    <variation>Q</variation>
    <location>
        <position position="7"/>
    </location>
</feature>
<feature type="sequence conflict" description="In Ref. 1; AAA64622/CAA58791." evidence="13" ref="1">
    <original>R</original>
    <variation>G</variation>
    <location>
        <position position="11"/>
    </location>
</feature>
<feature type="sequence conflict" description="In Ref. 1; AAA64622/CAA58791." evidence="13" ref="1">
    <original>PPLAFCCY</original>
    <variation>SARLLLLA</variation>
    <location>
        <begin position="16"/>
        <end position="23"/>
    </location>
</feature>
<feature type="sequence conflict" description="In Ref. 1; AAA64622/CAA58791." evidence="13" ref="1">
    <original>S</original>
    <variation>T</variation>
    <location>
        <position position="50"/>
    </location>
</feature>
<keyword id="KW-0025">Alternative splicing</keyword>
<keyword id="KW-1003">Cell membrane</keyword>
<keyword id="KW-0217">Developmental protein</keyword>
<keyword id="KW-0225">Disease variant</keyword>
<keyword id="KW-1015">Disulfide bond</keyword>
<keyword id="KW-0245">EGF-like domain</keyword>
<keyword id="KW-0472">Membrane</keyword>
<keyword id="KW-1267">Proteomics identification</keyword>
<keyword id="KW-1185">Reference proteome</keyword>
<keyword id="KW-0677">Repeat</keyword>
<keyword id="KW-0732">Signal</keyword>
<keyword id="KW-0812">Transmembrane</keyword>
<keyword id="KW-1133">Transmembrane helix</keyword>
<sequence length="380" mass="40934">MGAAAAEAPLRLPAAPPLAFCCYTSVLLLFAFSLPGSRASNQPPGGGGGSGGDCPGGKGKSINCSELNVRESDVRVCDESSCKYGGVCKEDGDGLKCACQFQCHTNYIPVCGSNGDTYQNECFLRRAACKHQKEITVIARGPCYSDNGSGSGEGEEEGSGAEVHRKHSKCGPCKYKAECDEDAENVGCVCNIDCSGYSFNPVCASDGSSYNNPCFVREASCIKQEQIDIRHLGHCTDTDDTSLLGKKDDGLQYRPDVKDASDQREDVYIGNHMPCPENLNGYCIHGKCEFIYSTQKASCRCESGYTGQHCEKTDFSILYVVPSRQKLTHVLIAAIIGAVQIAIIVAIVMCITRKCPKNNRGRRQKQNLGHFTSDTSSRMV</sequence>
<accession>Q8IYR6</accession>
<accession>Q13086</accession>
<accession>Q8N3T8</accession>
<protein>
    <recommendedName>
        <fullName>Tomoregulin-1</fullName>
        <shortName>TR-1</shortName>
    </recommendedName>
    <alternativeName>
        <fullName evidence="12">H7365</fullName>
    </alternativeName>
    <alternativeName>
        <fullName>Transmembrane protein with EGF-like and one follistatin-like domain</fullName>
    </alternativeName>
</protein>
<proteinExistence type="evidence at protein level"/>
<reference key="1">
    <citation type="journal article" date="1996" name="J. Neurochem.">
        <title>A novel transmembrane protein with epidermal growth factor and follistatin domains expressed in the hypothalamo-hypophysial axis of Xenopus laevis.</title>
        <authorList>
            <person name="Eib D.W."/>
            <person name="Martens G.J.M."/>
        </authorList>
    </citation>
    <scope>NUCLEOTIDE SEQUENCE [MRNA] (ISOFORM 1)</scope>
    <source>
        <tissue>Brain</tissue>
    </source>
</reference>
<reference key="2">
    <citation type="journal article" date="2007" name="BMC Genomics">
        <title>The full-ORF clone resource of the German cDNA consortium.</title>
        <authorList>
            <person name="Bechtel S."/>
            <person name="Rosenfelder H."/>
            <person name="Duda A."/>
            <person name="Schmidt C.P."/>
            <person name="Ernst U."/>
            <person name="Wellenreuther R."/>
            <person name="Mehrle A."/>
            <person name="Schuster C."/>
            <person name="Bahr A."/>
            <person name="Bloecker H."/>
            <person name="Heubner D."/>
            <person name="Hoerlein A."/>
            <person name="Michel G."/>
            <person name="Wedler H."/>
            <person name="Koehrer K."/>
            <person name="Ottenwaelder B."/>
            <person name="Poustka A."/>
            <person name="Wiemann S."/>
            <person name="Schupp I."/>
        </authorList>
    </citation>
    <scope>NUCLEOTIDE SEQUENCE [LARGE SCALE MRNA] (ISOFORM 2)</scope>
    <source>
        <tissue>Amygdala</tissue>
    </source>
</reference>
<reference key="3">
    <citation type="journal article" date="2004" name="Nature">
        <title>DNA sequence and analysis of human chromosome 9.</title>
        <authorList>
            <person name="Humphray S.J."/>
            <person name="Oliver K."/>
            <person name="Hunt A.R."/>
            <person name="Plumb R.W."/>
            <person name="Loveland J.E."/>
            <person name="Howe K.L."/>
            <person name="Andrews T.D."/>
            <person name="Searle S."/>
            <person name="Hunt S.E."/>
            <person name="Scott C.E."/>
            <person name="Jones M.C."/>
            <person name="Ainscough R."/>
            <person name="Almeida J.P."/>
            <person name="Ambrose K.D."/>
            <person name="Ashwell R.I.S."/>
            <person name="Babbage A.K."/>
            <person name="Babbage S."/>
            <person name="Bagguley C.L."/>
            <person name="Bailey J."/>
            <person name="Banerjee R."/>
            <person name="Barker D.J."/>
            <person name="Barlow K.F."/>
            <person name="Bates K."/>
            <person name="Beasley H."/>
            <person name="Beasley O."/>
            <person name="Bird C.P."/>
            <person name="Bray-Allen S."/>
            <person name="Brown A.J."/>
            <person name="Brown J.Y."/>
            <person name="Burford D."/>
            <person name="Burrill W."/>
            <person name="Burton J."/>
            <person name="Carder C."/>
            <person name="Carter N.P."/>
            <person name="Chapman J.C."/>
            <person name="Chen Y."/>
            <person name="Clarke G."/>
            <person name="Clark S.Y."/>
            <person name="Clee C.M."/>
            <person name="Clegg S."/>
            <person name="Collier R.E."/>
            <person name="Corby N."/>
            <person name="Crosier M."/>
            <person name="Cummings A.T."/>
            <person name="Davies J."/>
            <person name="Dhami P."/>
            <person name="Dunn M."/>
            <person name="Dutta I."/>
            <person name="Dyer L.W."/>
            <person name="Earthrowl M.E."/>
            <person name="Faulkner L."/>
            <person name="Fleming C.J."/>
            <person name="Frankish A."/>
            <person name="Frankland J.A."/>
            <person name="French L."/>
            <person name="Fricker D.G."/>
            <person name="Garner P."/>
            <person name="Garnett J."/>
            <person name="Ghori J."/>
            <person name="Gilbert J.G.R."/>
            <person name="Glison C."/>
            <person name="Grafham D.V."/>
            <person name="Gribble S."/>
            <person name="Griffiths C."/>
            <person name="Griffiths-Jones S."/>
            <person name="Grocock R."/>
            <person name="Guy J."/>
            <person name="Hall R.E."/>
            <person name="Hammond S."/>
            <person name="Harley J.L."/>
            <person name="Harrison E.S.I."/>
            <person name="Hart E.A."/>
            <person name="Heath P.D."/>
            <person name="Henderson C.D."/>
            <person name="Hopkins B.L."/>
            <person name="Howard P.J."/>
            <person name="Howden P.J."/>
            <person name="Huckle E."/>
            <person name="Johnson C."/>
            <person name="Johnson D."/>
            <person name="Joy A.A."/>
            <person name="Kay M."/>
            <person name="Keenan S."/>
            <person name="Kershaw J.K."/>
            <person name="Kimberley A.M."/>
            <person name="King A."/>
            <person name="Knights A."/>
            <person name="Laird G.K."/>
            <person name="Langford C."/>
            <person name="Lawlor S."/>
            <person name="Leongamornlert D.A."/>
            <person name="Leversha M."/>
            <person name="Lloyd C."/>
            <person name="Lloyd D.M."/>
            <person name="Lovell J."/>
            <person name="Martin S."/>
            <person name="Mashreghi-Mohammadi M."/>
            <person name="Matthews L."/>
            <person name="McLaren S."/>
            <person name="McLay K.E."/>
            <person name="McMurray A."/>
            <person name="Milne S."/>
            <person name="Nickerson T."/>
            <person name="Nisbett J."/>
            <person name="Nordsiek G."/>
            <person name="Pearce A.V."/>
            <person name="Peck A.I."/>
            <person name="Porter K.M."/>
            <person name="Pandian R."/>
            <person name="Pelan S."/>
            <person name="Phillimore B."/>
            <person name="Povey S."/>
            <person name="Ramsey Y."/>
            <person name="Rand V."/>
            <person name="Scharfe M."/>
            <person name="Sehra H.K."/>
            <person name="Shownkeen R."/>
            <person name="Sims S.K."/>
            <person name="Skuce C.D."/>
            <person name="Smith M."/>
            <person name="Steward C.A."/>
            <person name="Swarbreck D."/>
            <person name="Sycamore N."/>
            <person name="Tester J."/>
            <person name="Thorpe A."/>
            <person name="Tracey A."/>
            <person name="Tromans A."/>
            <person name="Thomas D.W."/>
            <person name="Wall M."/>
            <person name="Wallis J.M."/>
            <person name="West A.P."/>
            <person name="Whitehead S.L."/>
            <person name="Willey D.L."/>
            <person name="Williams S.A."/>
            <person name="Wilming L."/>
            <person name="Wray P.W."/>
            <person name="Young L."/>
            <person name="Ashurst J.L."/>
            <person name="Coulson A."/>
            <person name="Blocker H."/>
            <person name="Durbin R.M."/>
            <person name="Sulston J.E."/>
            <person name="Hubbard T."/>
            <person name="Jackson M.J."/>
            <person name="Bentley D.R."/>
            <person name="Beck S."/>
            <person name="Rogers J."/>
            <person name="Dunham I."/>
        </authorList>
    </citation>
    <scope>NUCLEOTIDE SEQUENCE [LARGE SCALE GENOMIC DNA]</scope>
</reference>
<reference key="4">
    <citation type="journal article" date="2004" name="Genome Res.">
        <title>The status, quality, and expansion of the NIH full-length cDNA project: the Mammalian Gene Collection (MGC).</title>
        <authorList>
            <consortium name="The MGC Project Team"/>
        </authorList>
    </citation>
    <scope>NUCLEOTIDE SEQUENCE [LARGE SCALE MRNA] (ISOFORM 1)</scope>
    <source>
        <tissue>Brain</tissue>
    </source>
</reference>
<reference key="5">
    <citation type="journal article" date="2003" name="Oncogene">
        <title>TMEFF1 and brain tumors.</title>
        <authorList>
            <person name="Gery S."/>
            <person name="Yin D."/>
            <person name="Xie D."/>
            <person name="Black K.L."/>
            <person name="Koeffler H.P."/>
        </authorList>
    </citation>
    <scope>TISSUE SPECIFICITY</scope>
    <scope>SUBCELLULAR LOCATION</scope>
    <scope>FUNCTION</scope>
</reference>
<reference key="6">
    <citation type="journal article" date="2006" name="J. Biol. Chem.">
        <title>Protein interaction analysis of ST14 domains and their point and deletion mutants.</title>
        <authorList>
            <person name="Ge W."/>
            <person name="Hu H."/>
            <person name="Ding K."/>
            <person name="Sun L."/>
            <person name="Zheng S."/>
        </authorList>
    </citation>
    <scope>POSSIBLE INTERACTION WITH ST14</scope>
    <scope>IDENTIFICATION BY MASS SPECTROMETRY</scope>
</reference>
<reference key="7">
    <citation type="journal article" date="2024" name="Nature">
        <title>TMEFF1 is a neuron-specific restriction factor for herpes simplex virus.</title>
        <authorList>
            <person name="Dai Y."/>
            <person name="Idorn M."/>
            <person name="Serrero M.C."/>
            <person name="Pan X."/>
            <person name="Thomsen E.A."/>
            <person name="Narita R."/>
            <person name="Maimaitili M."/>
            <person name="Qian X."/>
            <person name="Iversen M.B."/>
            <person name="Reinert L.S."/>
            <person name="Flygaard R.K."/>
            <person name="Chen M."/>
            <person name="Ding X."/>
            <person name="Zhang B.C."/>
            <person name="Carter-Timofte M.E."/>
            <person name="Lu Q."/>
            <person name="Jiang Z."/>
            <person name="Zhong Y."/>
            <person name="Zhang S."/>
            <person name="Da L."/>
            <person name="Zhu J."/>
            <person name="Denham M."/>
            <person name="Nissen P."/>
            <person name="Mogensen T.H."/>
            <person name="Mikkelsen J.G."/>
            <person name="Zhang S.Y."/>
            <person name="Casanova J.L."/>
            <person name="Cai Y."/>
            <person name="Paludan S.R."/>
        </authorList>
    </citation>
    <scope>FUNCTION</scope>
</reference>
<reference key="8">
    <citation type="journal article" date="2024" name="Nature">
        <title>Human TMEFF1 is a restriction factor for herpes simplex virus in the brain.</title>
        <authorList>
            <person name="Chan Y.H."/>
            <person name="Liu Z."/>
            <person name="Bastard P."/>
            <person name="Khobrekar N."/>
            <person name="Hutchison K.M."/>
            <person name="Yamazaki Y."/>
            <person name="Fan Q."/>
            <person name="Matuozzo D."/>
            <person name="Harschnitz O."/>
            <person name="Kerrouche N."/>
            <person name="Nakajima K."/>
            <person name="Amin P."/>
            <person name="Yatim A."/>
            <person name="Rinchai D."/>
            <person name="Chen J."/>
            <person name="Zhang P."/>
            <person name="Ciceri G."/>
            <person name="Chen J."/>
            <person name="Dobbs K."/>
            <person name="Belkaya S."/>
            <person name="Lee D."/>
            <person name="Gervais A."/>
            <person name="Aydin K."/>
            <person name="Kartal A."/>
            <person name="Hasek M.L."/>
            <person name="Zhao S."/>
            <person name="Reino E.G."/>
            <person name="Lee Y.S."/>
            <person name="Seeleuthner Y."/>
            <person name="Chaldebas M."/>
            <person name="Bailey R."/>
            <person name="Vanhulle C."/>
            <person name="Lorenzo L."/>
            <person name="Boucherit S."/>
            <person name="Rozenberg F."/>
            <person name="Marr N."/>
            <person name="Mogensen T.H."/>
            <person name="Aubart M."/>
            <person name="Cobat A."/>
            <person name="Dulac O."/>
            <person name="Emiroglu M."/>
            <person name="Paludan S.R."/>
            <person name="Abel L."/>
            <person name="Notarangelo L."/>
            <person name="Longnecker R."/>
            <person name="Smith G."/>
            <person name="Studer L."/>
            <person name="Casanova J.L."/>
            <person name="Zhang S.Y."/>
        </authorList>
    </citation>
    <scope>FUNCTION</scope>
    <scope>SUBCELLULAR LOCATION</scope>
    <scope>INVOLVEMENT IN ENCEPHALOPATHY</scope>
    <scope>ACUTE</scope>
    <scope>INFECTION-INDUCED</scope>
    <scope>HERPES-SPECIFIC</scope>
    <scope>VARIANT ALA-44</scope>
    <scope>CHARACTERIZATION OF VARIANT ALA-44</scope>
</reference>
<evidence type="ECO:0000255" key="1"/>
<evidence type="ECO:0000255" key="2">
    <source>
        <dbReference type="PROSITE-ProRule" id="PRU00076"/>
    </source>
</evidence>
<evidence type="ECO:0000255" key="3">
    <source>
        <dbReference type="PROSITE-ProRule" id="PRU00798"/>
    </source>
</evidence>
<evidence type="ECO:0000256" key="4">
    <source>
        <dbReference type="SAM" id="MobiDB-lite"/>
    </source>
</evidence>
<evidence type="ECO:0000269" key="5">
    <source>
    </source>
</evidence>
<evidence type="ECO:0000269" key="6">
    <source>
    </source>
</evidence>
<evidence type="ECO:0000269" key="7">
    <source>
    </source>
</evidence>
<evidence type="ECO:0000269" key="8">
    <source>
    </source>
</evidence>
<evidence type="ECO:0000303" key="9">
    <source>
    </source>
</evidence>
<evidence type="ECO:0000303" key="10">
    <source>
    </source>
</evidence>
<evidence type="ECO:0000303" key="11">
    <source>
    </source>
</evidence>
<evidence type="ECO:0000303" key="12">
    <source>
    </source>
</evidence>
<evidence type="ECO:0000305" key="13"/>
<evidence type="ECO:0000312" key="14">
    <source>
        <dbReference type="HGNC" id="HGNC:11866"/>
    </source>
</evidence>